<reference key="1">
    <citation type="submission" date="2006-12" db="EMBL/GenBank/DDBJ databases">
        <title>Complete sequence of Shewanella amazonensis SB2B.</title>
        <authorList>
            <consortium name="US DOE Joint Genome Institute"/>
            <person name="Copeland A."/>
            <person name="Lucas S."/>
            <person name="Lapidus A."/>
            <person name="Barry K."/>
            <person name="Detter J.C."/>
            <person name="Glavina del Rio T."/>
            <person name="Hammon N."/>
            <person name="Israni S."/>
            <person name="Dalin E."/>
            <person name="Tice H."/>
            <person name="Pitluck S."/>
            <person name="Munk A.C."/>
            <person name="Brettin T."/>
            <person name="Bruce D."/>
            <person name="Han C."/>
            <person name="Tapia R."/>
            <person name="Gilna P."/>
            <person name="Schmutz J."/>
            <person name="Larimer F."/>
            <person name="Land M."/>
            <person name="Hauser L."/>
            <person name="Kyrpides N."/>
            <person name="Mikhailova N."/>
            <person name="Fredrickson J."/>
            <person name="Richardson P."/>
        </authorList>
    </citation>
    <scope>NUCLEOTIDE SEQUENCE [LARGE SCALE GENOMIC DNA]</scope>
    <source>
        <strain>ATCC BAA-1098 / SB2B</strain>
    </source>
</reference>
<feature type="chain" id="PRO_1000055936" description="Large ribosomal subunit protein bL17">
    <location>
        <begin position="1"/>
        <end position="131"/>
    </location>
</feature>
<dbReference type="EMBL" id="CP000507">
    <property type="protein sequence ID" value="ABL98450.1"/>
    <property type="molecule type" value="Genomic_DNA"/>
</dbReference>
<dbReference type="RefSeq" id="WP_011758360.1">
    <property type="nucleotide sequence ID" value="NC_008700.1"/>
</dbReference>
<dbReference type="SMR" id="A1S244"/>
<dbReference type="STRING" id="326297.Sama_0239"/>
<dbReference type="KEGG" id="saz:Sama_0239"/>
<dbReference type="eggNOG" id="COG0203">
    <property type="taxonomic scope" value="Bacteria"/>
</dbReference>
<dbReference type="HOGENOM" id="CLU_074407_2_0_6"/>
<dbReference type="OrthoDB" id="9809073at2"/>
<dbReference type="Proteomes" id="UP000009175">
    <property type="component" value="Chromosome"/>
</dbReference>
<dbReference type="GO" id="GO:0022625">
    <property type="term" value="C:cytosolic large ribosomal subunit"/>
    <property type="evidence" value="ECO:0007669"/>
    <property type="project" value="TreeGrafter"/>
</dbReference>
<dbReference type="GO" id="GO:0003735">
    <property type="term" value="F:structural constituent of ribosome"/>
    <property type="evidence" value="ECO:0007669"/>
    <property type="project" value="InterPro"/>
</dbReference>
<dbReference type="GO" id="GO:0006412">
    <property type="term" value="P:translation"/>
    <property type="evidence" value="ECO:0007669"/>
    <property type="project" value="UniProtKB-UniRule"/>
</dbReference>
<dbReference type="FunFam" id="3.90.1030.10:FF:000001">
    <property type="entry name" value="50S ribosomal protein L17"/>
    <property type="match status" value="1"/>
</dbReference>
<dbReference type="Gene3D" id="3.90.1030.10">
    <property type="entry name" value="Ribosomal protein L17"/>
    <property type="match status" value="1"/>
</dbReference>
<dbReference type="HAMAP" id="MF_01368">
    <property type="entry name" value="Ribosomal_bL17"/>
    <property type="match status" value="1"/>
</dbReference>
<dbReference type="InterPro" id="IPR000456">
    <property type="entry name" value="Ribosomal_bL17"/>
</dbReference>
<dbReference type="InterPro" id="IPR047859">
    <property type="entry name" value="Ribosomal_bL17_CS"/>
</dbReference>
<dbReference type="InterPro" id="IPR036373">
    <property type="entry name" value="Ribosomal_bL17_sf"/>
</dbReference>
<dbReference type="NCBIfam" id="TIGR00059">
    <property type="entry name" value="L17"/>
    <property type="match status" value="1"/>
</dbReference>
<dbReference type="PANTHER" id="PTHR14413:SF16">
    <property type="entry name" value="LARGE RIBOSOMAL SUBUNIT PROTEIN BL17M"/>
    <property type="match status" value="1"/>
</dbReference>
<dbReference type="PANTHER" id="PTHR14413">
    <property type="entry name" value="RIBOSOMAL PROTEIN L17"/>
    <property type="match status" value="1"/>
</dbReference>
<dbReference type="Pfam" id="PF01196">
    <property type="entry name" value="Ribosomal_L17"/>
    <property type="match status" value="1"/>
</dbReference>
<dbReference type="SUPFAM" id="SSF64263">
    <property type="entry name" value="Prokaryotic ribosomal protein L17"/>
    <property type="match status" value="1"/>
</dbReference>
<dbReference type="PROSITE" id="PS01167">
    <property type="entry name" value="RIBOSOMAL_L17"/>
    <property type="match status" value="1"/>
</dbReference>
<accession>A1S244</accession>
<evidence type="ECO:0000255" key="1">
    <source>
        <dbReference type="HAMAP-Rule" id="MF_01368"/>
    </source>
</evidence>
<evidence type="ECO:0000305" key="2"/>
<protein>
    <recommendedName>
        <fullName evidence="1">Large ribosomal subunit protein bL17</fullName>
    </recommendedName>
    <alternativeName>
        <fullName evidence="2">50S ribosomal protein L17</fullName>
    </alternativeName>
</protein>
<comment type="subunit">
    <text evidence="1">Part of the 50S ribosomal subunit. Contacts protein L32.</text>
</comment>
<comment type="similarity">
    <text evidence="1">Belongs to the bacterial ribosomal protein bL17 family.</text>
</comment>
<gene>
    <name evidence="1" type="primary">rplQ</name>
    <name type="ordered locus">Sama_0239</name>
</gene>
<keyword id="KW-1185">Reference proteome</keyword>
<keyword id="KW-0687">Ribonucleoprotein</keyword>
<keyword id="KW-0689">Ribosomal protein</keyword>
<proteinExistence type="inferred from homology"/>
<organism>
    <name type="scientific">Shewanella amazonensis (strain ATCC BAA-1098 / SB2B)</name>
    <dbReference type="NCBI Taxonomy" id="326297"/>
    <lineage>
        <taxon>Bacteria</taxon>
        <taxon>Pseudomonadati</taxon>
        <taxon>Pseudomonadota</taxon>
        <taxon>Gammaproteobacteria</taxon>
        <taxon>Alteromonadales</taxon>
        <taxon>Shewanellaceae</taxon>
        <taxon>Shewanella</taxon>
    </lineage>
</organism>
<name>RL17_SHEAM</name>
<sequence>MRHRKSGRQLNRNSSHRQAMFRNMASSLVRHEIIKTTAVKAKELRRVVEPLITLAKSDSVANRRLAFARTRDQEVVGKLFNELGPRYQERPGGYTRILKCGLRAGDKAPMAYIELVGRPEAAQAVEVEAAE</sequence>